<accession>A4J8H4</accession>
<dbReference type="EC" id="5.6.1.7" evidence="1"/>
<dbReference type="EMBL" id="CP000612">
    <property type="protein sequence ID" value="ABO51377.1"/>
    <property type="molecule type" value="Genomic_DNA"/>
</dbReference>
<dbReference type="RefSeq" id="WP_011879170.1">
    <property type="nucleotide sequence ID" value="NC_009253.1"/>
</dbReference>
<dbReference type="SMR" id="A4J8H4"/>
<dbReference type="STRING" id="349161.Dred_2873"/>
<dbReference type="KEGG" id="drm:Dred_2873"/>
<dbReference type="eggNOG" id="COG0459">
    <property type="taxonomic scope" value="Bacteria"/>
</dbReference>
<dbReference type="HOGENOM" id="CLU_016503_3_0_9"/>
<dbReference type="OrthoDB" id="9766614at2"/>
<dbReference type="Proteomes" id="UP000001556">
    <property type="component" value="Chromosome"/>
</dbReference>
<dbReference type="GO" id="GO:0005737">
    <property type="term" value="C:cytoplasm"/>
    <property type="evidence" value="ECO:0007669"/>
    <property type="project" value="UniProtKB-SubCell"/>
</dbReference>
<dbReference type="GO" id="GO:0005524">
    <property type="term" value="F:ATP binding"/>
    <property type="evidence" value="ECO:0007669"/>
    <property type="project" value="UniProtKB-UniRule"/>
</dbReference>
<dbReference type="GO" id="GO:0140662">
    <property type="term" value="F:ATP-dependent protein folding chaperone"/>
    <property type="evidence" value="ECO:0007669"/>
    <property type="project" value="InterPro"/>
</dbReference>
<dbReference type="GO" id="GO:0016853">
    <property type="term" value="F:isomerase activity"/>
    <property type="evidence" value="ECO:0007669"/>
    <property type="project" value="UniProtKB-KW"/>
</dbReference>
<dbReference type="GO" id="GO:0051082">
    <property type="term" value="F:unfolded protein binding"/>
    <property type="evidence" value="ECO:0007669"/>
    <property type="project" value="UniProtKB-UniRule"/>
</dbReference>
<dbReference type="GO" id="GO:0042026">
    <property type="term" value="P:protein refolding"/>
    <property type="evidence" value="ECO:0007669"/>
    <property type="project" value="UniProtKB-UniRule"/>
</dbReference>
<dbReference type="CDD" id="cd03344">
    <property type="entry name" value="GroEL"/>
    <property type="match status" value="1"/>
</dbReference>
<dbReference type="FunFam" id="1.10.560.10:FF:000001">
    <property type="entry name" value="60 kDa chaperonin"/>
    <property type="match status" value="1"/>
</dbReference>
<dbReference type="FunFam" id="3.50.7.10:FF:000001">
    <property type="entry name" value="60 kDa chaperonin"/>
    <property type="match status" value="1"/>
</dbReference>
<dbReference type="Gene3D" id="3.50.7.10">
    <property type="entry name" value="GroEL"/>
    <property type="match status" value="1"/>
</dbReference>
<dbReference type="Gene3D" id="1.10.560.10">
    <property type="entry name" value="GroEL-like equatorial domain"/>
    <property type="match status" value="1"/>
</dbReference>
<dbReference type="Gene3D" id="3.30.260.10">
    <property type="entry name" value="TCP-1-like chaperonin intermediate domain"/>
    <property type="match status" value="1"/>
</dbReference>
<dbReference type="HAMAP" id="MF_00600">
    <property type="entry name" value="CH60"/>
    <property type="match status" value="1"/>
</dbReference>
<dbReference type="InterPro" id="IPR018370">
    <property type="entry name" value="Chaperonin_Cpn60_CS"/>
</dbReference>
<dbReference type="InterPro" id="IPR001844">
    <property type="entry name" value="Cpn60/GroEL"/>
</dbReference>
<dbReference type="InterPro" id="IPR002423">
    <property type="entry name" value="Cpn60/GroEL/TCP-1"/>
</dbReference>
<dbReference type="InterPro" id="IPR027409">
    <property type="entry name" value="GroEL-like_apical_dom_sf"/>
</dbReference>
<dbReference type="InterPro" id="IPR027413">
    <property type="entry name" value="GROEL-like_equatorial_sf"/>
</dbReference>
<dbReference type="InterPro" id="IPR027410">
    <property type="entry name" value="TCP-1-like_intermed_sf"/>
</dbReference>
<dbReference type="NCBIfam" id="TIGR02348">
    <property type="entry name" value="GroEL"/>
    <property type="match status" value="1"/>
</dbReference>
<dbReference type="NCBIfam" id="NF000592">
    <property type="entry name" value="PRK00013.1"/>
    <property type="match status" value="1"/>
</dbReference>
<dbReference type="NCBIfam" id="NF009487">
    <property type="entry name" value="PRK12849.1"/>
    <property type="match status" value="1"/>
</dbReference>
<dbReference type="NCBIfam" id="NF009488">
    <property type="entry name" value="PRK12850.1"/>
    <property type="match status" value="1"/>
</dbReference>
<dbReference type="NCBIfam" id="NF009489">
    <property type="entry name" value="PRK12851.1"/>
    <property type="match status" value="1"/>
</dbReference>
<dbReference type="PANTHER" id="PTHR45633">
    <property type="entry name" value="60 KDA HEAT SHOCK PROTEIN, MITOCHONDRIAL"/>
    <property type="match status" value="1"/>
</dbReference>
<dbReference type="Pfam" id="PF00118">
    <property type="entry name" value="Cpn60_TCP1"/>
    <property type="match status" value="1"/>
</dbReference>
<dbReference type="PRINTS" id="PR00298">
    <property type="entry name" value="CHAPERONIN60"/>
</dbReference>
<dbReference type="SUPFAM" id="SSF52029">
    <property type="entry name" value="GroEL apical domain-like"/>
    <property type="match status" value="1"/>
</dbReference>
<dbReference type="SUPFAM" id="SSF48592">
    <property type="entry name" value="GroEL equatorial domain-like"/>
    <property type="match status" value="1"/>
</dbReference>
<dbReference type="SUPFAM" id="SSF54849">
    <property type="entry name" value="GroEL-intermediate domain like"/>
    <property type="match status" value="1"/>
</dbReference>
<dbReference type="PROSITE" id="PS00296">
    <property type="entry name" value="CHAPERONINS_CPN60"/>
    <property type="match status" value="1"/>
</dbReference>
<organism>
    <name type="scientific">Desulforamulus reducens (strain ATCC BAA-1160 / DSM 100696 / MI-1)</name>
    <name type="common">Desulfotomaculum reducens</name>
    <dbReference type="NCBI Taxonomy" id="349161"/>
    <lineage>
        <taxon>Bacteria</taxon>
        <taxon>Bacillati</taxon>
        <taxon>Bacillota</taxon>
        <taxon>Clostridia</taxon>
        <taxon>Eubacteriales</taxon>
        <taxon>Peptococcaceae</taxon>
        <taxon>Desulforamulus</taxon>
    </lineage>
</organism>
<feature type="chain" id="PRO_1000072630" description="Chaperonin GroEL">
    <location>
        <begin position="1"/>
        <end position="542"/>
    </location>
</feature>
<feature type="binding site" evidence="1">
    <location>
        <begin position="29"/>
        <end position="32"/>
    </location>
    <ligand>
        <name>ATP</name>
        <dbReference type="ChEBI" id="CHEBI:30616"/>
    </ligand>
</feature>
<feature type="binding site" evidence="1">
    <location>
        <begin position="86"/>
        <end position="90"/>
    </location>
    <ligand>
        <name>ATP</name>
        <dbReference type="ChEBI" id="CHEBI:30616"/>
    </ligand>
</feature>
<feature type="binding site" evidence="1">
    <location>
        <position position="414"/>
    </location>
    <ligand>
        <name>ATP</name>
        <dbReference type="ChEBI" id="CHEBI:30616"/>
    </ligand>
</feature>
<feature type="binding site" evidence="1">
    <location>
        <position position="491"/>
    </location>
    <ligand>
        <name>ATP</name>
        <dbReference type="ChEBI" id="CHEBI:30616"/>
    </ligand>
</feature>
<proteinExistence type="inferred from homology"/>
<evidence type="ECO:0000255" key="1">
    <source>
        <dbReference type="HAMAP-Rule" id="MF_00600"/>
    </source>
</evidence>
<keyword id="KW-0067">ATP-binding</keyword>
<keyword id="KW-0143">Chaperone</keyword>
<keyword id="KW-0963">Cytoplasm</keyword>
<keyword id="KW-0413">Isomerase</keyword>
<keyword id="KW-0547">Nucleotide-binding</keyword>
<keyword id="KW-1185">Reference proteome</keyword>
<reference key="1">
    <citation type="submission" date="2007-03" db="EMBL/GenBank/DDBJ databases">
        <title>Complete sequence of Desulfotomaculum reducens MI-1.</title>
        <authorList>
            <consortium name="US DOE Joint Genome Institute"/>
            <person name="Copeland A."/>
            <person name="Lucas S."/>
            <person name="Lapidus A."/>
            <person name="Barry K."/>
            <person name="Detter J.C."/>
            <person name="Glavina del Rio T."/>
            <person name="Hammon N."/>
            <person name="Israni S."/>
            <person name="Dalin E."/>
            <person name="Tice H."/>
            <person name="Pitluck S."/>
            <person name="Sims D."/>
            <person name="Brettin T."/>
            <person name="Bruce D."/>
            <person name="Han C."/>
            <person name="Tapia R."/>
            <person name="Schmutz J."/>
            <person name="Larimer F."/>
            <person name="Land M."/>
            <person name="Hauser L."/>
            <person name="Kyrpides N."/>
            <person name="Kim E."/>
            <person name="Tebo B.M."/>
            <person name="Richardson P."/>
        </authorList>
    </citation>
    <scope>NUCLEOTIDE SEQUENCE [LARGE SCALE GENOMIC DNA]</scope>
    <source>
        <strain>ATCC BAA-1160 / DSM 100696 / MI-1</strain>
    </source>
</reference>
<name>CH60_DESRM</name>
<sequence>MAKEIIFREDARRALERGVNALAEAVKVTLGPKGRNVVIEKKFGAPTITNDGVTIAREIELEDNFENMGAQLVKEVATKTNDVAGDGTTTATVLAQALVREGLKNVAAGANPMIIKRGIEKAVEKAVEEIKAMAKPIESKEAIAQVATVSANDDSIGNLIAEAMEKVGKDGVITVEESQGIGTNLEVVEGMNFDRGYISPYMITDTDKMEAALTDPYILITDKKVSSVQELLPVLEKVVQTGNKPVLLICEDLEGEALATLVLNKLRGTLNVVAVKAPGFGDRRKAMLEDIAILTGGTVITEEVGLKLDKAELDMLGTARQIRVKKEETIIVGGAGEQAQIEGRIAQIKKQIEETTSDFDREKLQERLAKLAGGVAVIQVGAATEVEMKEKKLRIDDALNATRAAVEEGIVPGGGSAFVNIITTLDSVQLEGDAKTGVDIVKRALEEPLRQIANNAGLEGSVVVEKVRTTGKGFNAMSEEYVDMIAAGIIDPAKVTRSALQNAASIAAMVLTTETLVADKPEKDAPNPMAGMGGMGGMGGMM</sequence>
<protein>
    <recommendedName>
        <fullName evidence="1">Chaperonin GroEL</fullName>
        <ecNumber evidence="1">5.6.1.7</ecNumber>
    </recommendedName>
    <alternativeName>
        <fullName evidence="1">60 kDa chaperonin</fullName>
    </alternativeName>
    <alternativeName>
        <fullName evidence="1">Chaperonin-60</fullName>
        <shortName evidence="1">Cpn60</shortName>
    </alternativeName>
</protein>
<gene>
    <name evidence="1" type="primary">groEL</name>
    <name evidence="1" type="synonym">groL</name>
    <name type="ordered locus">Dred_2873</name>
</gene>
<comment type="function">
    <text evidence="1">Together with its co-chaperonin GroES, plays an essential role in assisting protein folding. The GroEL-GroES system forms a nano-cage that allows encapsulation of the non-native substrate proteins and provides a physical environment optimized to promote and accelerate protein folding.</text>
</comment>
<comment type="catalytic activity">
    <reaction evidence="1">
        <text>ATP + H2O + a folded polypeptide = ADP + phosphate + an unfolded polypeptide.</text>
        <dbReference type="EC" id="5.6.1.7"/>
    </reaction>
</comment>
<comment type="subunit">
    <text evidence="1">Forms a cylinder of 14 subunits composed of two heptameric rings stacked back-to-back. Interacts with the co-chaperonin GroES.</text>
</comment>
<comment type="subcellular location">
    <subcellularLocation>
        <location evidence="1">Cytoplasm</location>
    </subcellularLocation>
</comment>
<comment type="similarity">
    <text evidence="1">Belongs to the chaperonin (HSP60) family.</text>
</comment>